<evidence type="ECO:0000250" key="1">
    <source>
        <dbReference type="UniProtKB" id="P64606"/>
    </source>
</evidence>
<evidence type="ECO:0000255" key="2"/>
<evidence type="ECO:0000305" key="3"/>
<feature type="chain" id="PRO_0000169466" description="Intermembrane phospholipid transport system permease protein MlaE">
    <location>
        <begin position="1"/>
        <end position="260"/>
    </location>
</feature>
<feature type="topological domain" description="Cytoplasmic" evidence="1">
    <location>
        <begin position="1"/>
        <end position="50"/>
    </location>
</feature>
<feature type="transmembrane region" description="Helical" evidence="2">
    <location>
        <begin position="51"/>
        <end position="71"/>
    </location>
</feature>
<feature type="topological domain" description="Periplasmic" evidence="1">
    <location>
        <begin position="72"/>
        <end position="88"/>
    </location>
</feature>
<feature type="transmembrane region" description="Helical" evidence="2">
    <location>
        <begin position="89"/>
        <end position="109"/>
    </location>
</feature>
<feature type="topological domain" description="Cytoplasmic" evidence="1">
    <location>
        <begin position="110"/>
        <end position="147"/>
    </location>
</feature>
<feature type="transmembrane region" description="Helical" evidence="2">
    <location>
        <begin position="148"/>
        <end position="168"/>
    </location>
</feature>
<feature type="topological domain" description="Periplasmic" evidence="1">
    <location>
        <begin position="169"/>
        <end position="198"/>
    </location>
</feature>
<feature type="transmembrane region" description="Helical" evidence="2">
    <location>
        <begin position="199"/>
        <end position="219"/>
    </location>
</feature>
<feature type="topological domain" description="Cytoplasmic" evidence="1">
    <location>
        <begin position="220"/>
        <end position="238"/>
    </location>
</feature>
<feature type="transmembrane region" description="Helical" evidence="2">
    <location>
        <begin position="239"/>
        <end position="259"/>
    </location>
</feature>
<feature type="topological domain" description="Periplasmic" evidence="1">
    <location>
        <position position="260"/>
    </location>
</feature>
<proteinExistence type="inferred from homology"/>
<name>MLAE_ECO57</name>
<sequence>MLLNALASLGHKGIKTLRTFGRAGLMLFNALVGKPEFRKHAPLLVRQLYNVGVLSMLIIVVSGVFIGMVLGLQGYLVLTTYSAETSLGMLVALSLLRELGPVVAALLFAGRAGSALTAEIGLMRATEQLSSMEMMAVDPLRRVISPRFWAGVISLPLLTVIFVAVGIWGGSLVGVSWKGIDSGFFWSAMQNAVDWRMDLVNCLIKSVVFAITVTWISLFNGYDAIPTSAGISRATTRTVVHSSLAVLGLDFVLTALMFGN</sequence>
<gene>
    <name evidence="1" type="primary">mlaE</name>
    <name type="ordered locus">Z4557</name>
    <name type="ordered locus">ECs4073</name>
</gene>
<accession>P64608</accession>
<accession>P45392</accession>
<organism>
    <name type="scientific">Escherichia coli O157:H7</name>
    <dbReference type="NCBI Taxonomy" id="83334"/>
    <lineage>
        <taxon>Bacteria</taxon>
        <taxon>Pseudomonadati</taxon>
        <taxon>Pseudomonadota</taxon>
        <taxon>Gammaproteobacteria</taxon>
        <taxon>Enterobacterales</taxon>
        <taxon>Enterobacteriaceae</taxon>
        <taxon>Escherichia</taxon>
    </lineage>
</organism>
<dbReference type="EMBL" id="AE005174">
    <property type="protein sequence ID" value="AAG58328.1"/>
    <property type="molecule type" value="Genomic_DNA"/>
</dbReference>
<dbReference type="EMBL" id="BA000007">
    <property type="protein sequence ID" value="BAB37496.1"/>
    <property type="molecule type" value="Genomic_DNA"/>
</dbReference>
<dbReference type="PIR" id="A91138">
    <property type="entry name" value="A91138"/>
</dbReference>
<dbReference type="PIR" id="D85983">
    <property type="entry name" value="D85983"/>
</dbReference>
<dbReference type="RefSeq" id="NP_312100.1">
    <property type="nucleotide sequence ID" value="NC_002695.1"/>
</dbReference>
<dbReference type="RefSeq" id="WP_000925795.1">
    <property type="nucleotide sequence ID" value="NZ_VOAI01000014.1"/>
</dbReference>
<dbReference type="SMR" id="P64608"/>
<dbReference type="STRING" id="155864.Z4557"/>
<dbReference type="GeneID" id="916084"/>
<dbReference type="GeneID" id="93778787"/>
<dbReference type="KEGG" id="ece:Z4557"/>
<dbReference type="KEGG" id="ecs:ECs_4073"/>
<dbReference type="PATRIC" id="fig|386585.9.peg.4252"/>
<dbReference type="eggNOG" id="COG0767">
    <property type="taxonomic scope" value="Bacteria"/>
</dbReference>
<dbReference type="HOGENOM" id="CLU_045686_1_1_6"/>
<dbReference type="OMA" id="VFQGYDC"/>
<dbReference type="Proteomes" id="UP000000558">
    <property type="component" value="Chromosome"/>
</dbReference>
<dbReference type="Proteomes" id="UP000002519">
    <property type="component" value="Chromosome"/>
</dbReference>
<dbReference type="GO" id="GO:0043190">
    <property type="term" value="C:ATP-binding cassette (ABC) transporter complex"/>
    <property type="evidence" value="ECO:0007669"/>
    <property type="project" value="InterPro"/>
</dbReference>
<dbReference type="GO" id="GO:0005548">
    <property type="term" value="F:phospholipid transporter activity"/>
    <property type="evidence" value="ECO:0007669"/>
    <property type="project" value="TreeGrafter"/>
</dbReference>
<dbReference type="InterPro" id="IPR003453">
    <property type="entry name" value="ABC_MlaE_roteobac"/>
</dbReference>
<dbReference type="InterPro" id="IPR053408">
    <property type="entry name" value="MlaE_Permease"/>
</dbReference>
<dbReference type="InterPro" id="IPR030802">
    <property type="entry name" value="Permease_MalE"/>
</dbReference>
<dbReference type="NCBIfam" id="TIGR00056">
    <property type="entry name" value="MlaE family lipid ABC transporter permease subunit"/>
    <property type="match status" value="1"/>
</dbReference>
<dbReference type="NCBIfam" id="NF033619">
    <property type="entry name" value="perm_MlaE_1"/>
    <property type="match status" value="1"/>
</dbReference>
<dbReference type="PANTHER" id="PTHR30188">
    <property type="entry name" value="ABC TRANSPORTER PERMEASE PROTEIN-RELATED"/>
    <property type="match status" value="1"/>
</dbReference>
<dbReference type="PANTHER" id="PTHR30188:SF4">
    <property type="entry name" value="PROTEIN TRIGALACTOSYLDIACYLGLYCEROL 1, CHLOROPLASTIC"/>
    <property type="match status" value="1"/>
</dbReference>
<dbReference type="Pfam" id="PF02405">
    <property type="entry name" value="MlaE"/>
    <property type="match status" value="1"/>
</dbReference>
<keyword id="KW-0997">Cell inner membrane</keyword>
<keyword id="KW-1003">Cell membrane</keyword>
<keyword id="KW-0472">Membrane</keyword>
<keyword id="KW-1185">Reference proteome</keyword>
<keyword id="KW-0812">Transmembrane</keyword>
<keyword id="KW-1133">Transmembrane helix</keyword>
<keyword id="KW-0813">Transport</keyword>
<reference key="1">
    <citation type="journal article" date="2001" name="Nature">
        <title>Genome sequence of enterohaemorrhagic Escherichia coli O157:H7.</title>
        <authorList>
            <person name="Perna N.T."/>
            <person name="Plunkett G. III"/>
            <person name="Burland V."/>
            <person name="Mau B."/>
            <person name="Glasner J.D."/>
            <person name="Rose D.J."/>
            <person name="Mayhew G.F."/>
            <person name="Evans P.S."/>
            <person name="Gregor J."/>
            <person name="Kirkpatrick H.A."/>
            <person name="Posfai G."/>
            <person name="Hackett J."/>
            <person name="Klink S."/>
            <person name="Boutin A."/>
            <person name="Shao Y."/>
            <person name="Miller L."/>
            <person name="Grotbeck E.J."/>
            <person name="Davis N.W."/>
            <person name="Lim A."/>
            <person name="Dimalanta E.T."/>
            <person name="Potamousis K."/>
            <person name="Apodaca J."/>
            <person name="Anantharaman T.S."/>
            <person name="Lin J."/>
            <person name="Yen G."/>
            <person name="Schwartz D.C."/>
            <person name="Welch R.A."/>
            <person name="Blattner F.R."/>
        </authorList>
    </citation>
    <scope>NUCLEOTIDE SEQUENCE [LARGE SCALE GENOMIC DNA]</scope>
    <source>
        <strain>O157:H7 / EDL933 / ATCC 700927 / EHEC</strain>
    </source>
</reference>
<reference key="2">
    <citation type="journal article" date="2001" name="DNA Res.">
        <title>Complete genome sequence of enterohemorrhagic Escherichia coli O157:H7 and genomic comparison with a laboratory strain K-12.</title>
        <authorList>
            <person name="Hayashi T."/>
            <person name="Makino K."/>
            <person name="Ohnishi M."/>
            <person name="Kurokawa K."/>
            <person name="Ishii K."/>
            <person name="Yokoyama K."/>
            <person name="Han C.-G."/>
            <person name="Ohtsubo E."/>
            <person name="Nakayama K."/>
            <person name="Murata T."/>
            <person name="Tanaka M."/>
            <person name="Tobe T."/>
            <person name="Iida T."/>
            <person name="Takami H."/>
            <person name="Honda T."/>
            <person name="Sasakawa C."/>
            <person name="Ogasawara N."/>
            <person name="Yasunaga T."/>
            <person name="Kuhara S."/>
            <person name="Shiba T."/>
            <person name="Hattori M."/>
            <person name="Shinagawa H."/>
        </authorList>
    </citation>
    <scope>NUCLEOTIDE SEQUENCE [LARGE SCALE GENOMIC DNA]</scope>
    <source>
        <strain>O157:H7 / Sakai / RIMD 0509952 / EHEC</strain>
    </source>
</reference>
<comment type="function">
    <text evidence="1">Part of the ABC transporter complex MlaFEDB, which is involved in a phospholipid transport pathway that maintains lipid asymmetry in the outer membrane by retrograde trafficking of phospholipids from the outer membrane to the inner membrane. Probably responsible for the translocation of the substrate across the membrane.</text>
</comment>
<comment type="subunit">
    <text evidence="1">The complex is composed of two ATP-binding proteins (MlaF), two transmembrane proteins (MlaE), two cytoplasmic solute-binding proteins (MlaB) and six periplasmic solute-binding proteins (MlaD).</text>
</comment>
<comment type="subcellular location">
    <subcellularLocation>
        <location evidence="1">Cell inner membrane</location>
        <topology evidence="2">Multi-pass membrane protein</topology>
    </subcellularLocation>
</comment>
<comment type="similarity">
    <text evidence="3">Belongs to the MlaE permease family.</text>
</comment>
<protein>
    <recommendedName>
        <fullName evidence="1">Intermembrane phospholipid transport system permease protein MlaE</fullName>
    </recommendedName>
</protein>